<reference key="1">
    <citation type="journal article" date="2010" name="Appl. Environ. Microbiol.">
        <title>Conserved symbiotic plasmid DNA sequences in the multireplicon pangenomic structure of Rhizobium etli.</title>
        <authorList>
            <person name="Gonzalez V."/>
            <person name="Acosta J.L."/>
            <person name="Santamaria R.I."/>
            <person name="Bustos P."/>
            <person name="Fernandez J.L."/>
            <person name="Hernandez Gonzalez I.L."/>
            <person name="Diaz R."/>
            <person name="Flores M."/>
            <person name="Palacios R."/>
            <person name="Mora J."/>
            <person name="Davila G."/>
        </authorList>
    </citation>
    <scope>NUCLEOTIDE SEQUENCE [LARGE SCALE GENOMIC DNA]</scope>
    <source>
        <strain>CIAT 652</strain>
    </source>
</reference>
<gene>
    <name evidence="1" type="primary">rpmJ</name>
    <name type="ordered locus">RHECIAT_CH0003783</name>
</gene>
<comment type="similarity">
    <text evidence="1">Belongs to the bacterial ribosomal protein bL36 family.</text>
</comment>
<feature type="chain" id="PRO_1000101061" description="Large ribosomal subunit protein bL36">
    <location>
        <begin position="1"/>
        <end position="41"/>
    </location>
</feature>
<keyword id="KW-0687">Ribonucleoprotein</keyword>
<keyword id="KW-0689">Ribosomal protein</keyword>
<protein>
    <recommendedName>
        <fullName evidence="1">Large ribosomal subunit protein bL36</fullName>
    </recommendedName>
    <alternativeName>
        <fullName evidence="2">50S ribosomal protein L36</fullName>
    </alternativeName>
</protein>
<sequence length="41" mass="4991">MKIKNSLKSLKARHRDNRLVRRKGRIYIINKLNPRYKARQG</sequence>
<dbReference type="EMBL" id="CP001074">
    <property type="protein sequence ID" value="ACE92721.1"/>
    <property type="molecule type" value="Genomic_DNA"/>
</dbReference>
<dbReference type="SMR" id="B3PZS1"/>
<dbReference type="KEGG" id="rec:RHECIAT_CH0003783"/>
<dbReference type="eggNOG" id="COG0257">
    <property type="taxonomic scope" value="Bacteria"/>
</dbReference>
<dbReference type="HOGENOM" id="CLU_135723_3_0_5"/>
<dbReference type="Proteomes" id="UP000008817">
    <property type="component" value="Chromosome"/>
</dbReference>
<dbReference type="GO" id="GO:1990904">
    <property type="term" value="C:ribonucleoprotein complex"/>
    <property type="evidence" value="ECO:0007669"/>
    <property type="project" value="UniProtKB-KW"/>
</dbReference>
<dbReference type="GO" id="GO:0005840">
    <property type="term" value="C:ribosome"/>
    <property type="evidence" value="ECO:0007669"/>
    <property type="project" value="UniProtKB-KW"/>
</dbReference>
<dbReference type="GO" id="GO:0003735">
    <property type="term" value="F:structural constituent of ribosome"/>
    <property type="evidence" value="ECO:0007669"/>
    <property type="project" value="InterPro"/>
</dbReference>
<dbReference type="GO" id="GO:0006412">
    <property type="term" value="P:translation"/>
    <property type="evidence" value="ECO:0007669"/>
    <property type="project" value="UniProtKB-UniRule"/>
</dbReference>
<dbReference type="HAMAP" id="MF_00251">
    <property type="entry name" value="Ribosomal_bL36"/>
    <property type="match status" value="1"/>
</dbReference>
<dbReference type="InterPro" id="IPR000473">
    <property type="entry name" value="Ribosomal_bL36"/>
</dbReference>
<dbReference type="InterPro" id="IPR035977">
    <property type="entry name" value="Ribosomal_bL36_sp"/>
</dbReference>
<dbReference type="InterPro" id="IPR047621">
    <property type="entry name" value="Ribosomal_L36_bact"/>
</dbReference>
<dbReference type="NCBIfam" id="NF002021">
    <property type="entry name" value="PRK00831.1"/>
    <property type="match status" value="1"/>
</dbReference>
<dbReference type="NCBIfam" id="TIGR01022">
    <property type="entry name" value="rpmJ_bact"/>
    <property type="match status" value="1"/>
</dbReference>
<dbReference type="PANTHER" id="PTHR47781">
    <property type="entry name" value="50S RIBOSOMAL PROTEIN L36 2"/>
    <property type="match status" value="1"/>
</dbReference>
<dbReference type="PANTHER" id="PTHR47781:SF1">
    <property type="entry name" value="LARGE RIBOSOMAL SUBUNIT PROTEIN BL36B"/>
    <property type="match status" value="1"/>
</dbReference>
<dbReference type="Pfam" id="PF00444">
    <property type="entry name" value="Ribosomal_L36"/>
    <property type="match status" value="1"/>
</dbReference>
<dbReference type="SUPFAM" id="SSF57840">
    <property type="entry name" value="Ribosomal protein L36"/>
    <property type="match status" value="1"/>
</dbReference>
<evidence type="ECO:0000255" key="1">
    <source>
        <dbReference type="HAMAP-Rule" id="MF_00251"/>
    </source>
</evidence>
<evidence type="ECO:0000305" key="2"/>
<organism>
    <name type="scientific">Rhizobium etli (strain CIAT 652)</name>
    <dbReference type="NCBI Taxonomy" id="491916"/>
    <lineage>
        <taxon>Bacteria</taxon>
        <taxon>Pseudomonadati</taxon>
        <taxon>Pseudomonadota</taxon>
        <taxon>Alphaproteobacteria</taxon>
        <taxon>Hyphomicrobiales</taxon>
        <taxon>Rhizobiaceae</taxon>
        <taxon>Rhizobium/Agrobacterium group</taxon>
        <taxon>Rhizobium</taxon>
    </lineage>
</organism>
<accession>B3PZS1</accession>
<name>RL36_RHIE6</name>
<proteinExistence type="inferred from homology"/>